<gene>
    <name evidence="1" type="primary">ppnP</name>
    <name type="ordered locus">YPN_0879</name>
    <name type="ORF">YP516_0951</name>
</gene>
<keyword id="KW-0328">Glycosyltransferase</keyword>
<keyword id="KW-0808">Transferase</keyword>
<protein>
    <recommendedName>
        <fullName evidence="1">Pyrimidine/purine nucleoside phosphorylase</fullName>
        <ecNumber evidence="1">2.4.2.1</ecNumber>
        <ecNumber evidence="1">2.4.2.2</ecNumber>
    </recommendedName>
    <alternativeName>
        <fullName evidence="1">Adenosine phosphorylase</fullName>
    </alternativeName>
    <alternativeName>
        <fullName evidence="1">Cytidine phosphorylase</fullName>
    </alternativeName>
    <alternativeName>
        <fullName evidence="1">Guanosine phosphorylase</fullName>
    </alternativeName>
    <alternativeName>
        <fullName evidence="1">Inosine phosphorylase</fullName>
    </alternativeName>
    <alternativeName>
        <fullName evidence="1">Thymidine phosphorylase</fullName>
    </alternativeName>
    <alternativeName>
        <fullName evidence="1">Uridine phosphorylase</fullName>
    </alternativeName>
    <alternativeName>
        <fullName evidence="1">Xanthosine phosphorylase</fullName>
    </alternativeName>
</protein>
<reference key="1">
    <citation type="journal article" date="2006" name="J. Bacteriol.">
        <title>Complete genome sequence of Yersinia pestis strains Antiqua and Nepal516: evidence of gene reduction in an emerging pathogen.</title>
        <authorList>
            <person name="Chain P.S.G."/>
            <person name="Hu P."/>
            <person name="Malfatti S.A."/>
            <person name="Radnedge L."/>
            <person name="Larimer F."/>
            <person name="Vergez L.M."/>
            <person name="Worsham P."/>
            <person name="Chu M.C."/>
            <person name="Andersen G.L."/>
        </authorList>
    </citation>
    <scope>NUCLEOTIDE SEQUENCE [LARGE SCALE GENOMIC DNA]</scope>
    <source>
        <strain>Nepal516</strain>
    </source>
</reference>
<reference key="2">
    <citation type="submission" date="2009-04" db="EMBL/GenBank/DDBJ databases">
        <title>Yersinia pestis Nepal516A whole genome shotgun sequencing project.</title>
        <authorList>
            <person name="Plunkett G. III"/>
            <person name="Anderson B.D."/>
            <person name="Baumler D.J."/>
            <person name="Burland V."/>
            <person name="Cabot E.L."/>
            <person name="Glasner J.D."/>
            <person name="Mau B."/>
            <person name="Neeno-Eckwall E."/>
            <person name="Perna N.T."/>
            <person name="Munk A.C."/>
            <person name="Tapia R."/>
            <person name="Green L.D."/>
            <person name="Rogers Y.C."/>
            <person name="Detter J.C."/>
            <person name="Bruce D.C."/>
            <person name="Brettin T.S."/>
        </authorList>
    </citation>
    <scope>NUCLEOTIDE SEQUENCE [LARGE SCALE GENOMIC DNA]</scope>
    <source>
        <strain>Nepal516</strain>
    </source>
</reference>
<proteinExistence type="inferred from homology"/>
<feature type="chain" id="PRO_0000298737" description="Pyrimidine/purine nucleoside phosphorylase">
    <location>
        <begin position="1"/>
        <end position="95"/>
    </location>
</feature>
<name>PPNP_YERPN</name>
<evidence type="ECO:0000255" key="1">
    <source>
        <dbReference type="HAMAP-Rule" id="MF_01537"/>
    </source>
</evidence>
<sequence length="95" mass="10427">MLKFNEYFTGKVKSIGFDSDSIGPASVGVMEKGEYTFSTAKAEEMTVITGSLKVLIPGSPDWQTFMPGETFYIPGESEFNLQVAEASSYLCKYLS</sequence>
<dbReference type="EC" id="2.4.2.1" evidence="1"/>
<dbReference type="EC" id="2.4.2.2" evidence="1"/>
<dbReference type="EMBL" id="CP000305">
    <property type="protein sequence ID" value="ABG17211.1"/>
    <property type="molecule type" value="Genomic_DNA"/>
</dbReference>
<dbReference type="EMBL" id="ACNQ01000008">
    <property type="protein sequence ID" value="EEO77292.1"/>
    <property type="molecule type" value="Genomic_DNA"/>
</dbReference>
<dbReference type="RefSeq" id="WP_002208692.1">
    <property type="nucleotide sequence ID" value="NZ_ACNQ01000008.1"/>
</dbReference>
<dbReference type="SMR" id="Q1CLB9"/>
<dbReference type="GeneID" id="57975503"/>
<dbReference type="KEGG" id="ypn:YPN_0879"/>
<dbReference type="HOGENOM" id="CLU_157874_0_0_6"/>
<dbReference type="Proteomes" id="UP000008936">
    <property type="component" value="Chromosome"/>
</dbReference>
<dbReference type="GO" id="GO:0005829">
    <property type="term" value="C:cytosol"/>
    <property type="evidence" value="ECO:0007669"/>
    <property type="project" value="TreeGrafter"/>
</dbReference>
<dbReference type="GO" id="GO:0047975">
    <property type="term" value="F:guanosine phosphorylase activity"/>
    <property type="evidence" value="ECO:0007669"/>
    <property type="project" value="UniProtKB-EC"/>
</dbReference>
<dbReference type="GO" id="GO:0004731">
    <property type="term" value="F:purine-nucleoside phosphorylase activity"/>
    <property type="evidence" value="ECO:0007669"/>
    <property type="project" value="UniProtKB-UniRule"/>
</dbReference>
<dbReference type="GO" id="GO:0009032">
    <property type="term" value="F:thymidine phosphorylase activity"/>
    <property type="evidence" value="ECO:0007669"/>
    <property type="project" value="UniProtKB-EC"/>
</dbReference>
<dbReference type="GO" id="GO:0004850">
    <property type="term" value="F:uridine phosphorylase activity"/>
    <property type="evidence" value="ECO:0007669"/>
    <property type="project" value="UniProtKB-EC"/>
</dbReference>
<dbReference type="FunFam" id="2.60.120.10:FF:000016">
    <property type="entry name" value="Pyrimidine/purine nucleoside phosphorylase"/>
    <property type="match status" value="1"/>
</dbReference>
<dbReference type="Gene3D" id="2.60.120.10">
    <property type="entry name" value="Jelly Rolls"/>
    <property type="match status" value="1"/>
</dbReference>
<dbReference type="HAMAP" id="MF_01537">
    <property type="entry name" value="Nucleos_phosphorylase_PpnP"/>
    <property type="match status" value="1"/>
</dbReference>
<dbReference type="InterPro" id="IPR009664">
    <property type="entry name" value="Ppnp"/>
</dbReference>
<dbReference type="InterPro" id="IPR014710">
    <property type="entry name" value="RmlC-like_jellyroll"/>
</dbReference>
<dbReference type="InterPro" id="IPR011051">
    <property type="entry name" value="RmlC_Cupin_sf"/>
</dbReference>
<dbReference type="NCBIfam" id="NF007875">
    <property type="entry name" value="PRK10579.1"/>
    <property type="match status" value="1"/>
</dbReference>
<dbReference type="PANTHER" id="PTHR36540">
    <property type="entry name" value="PYRIMIDINE/PURINE NUCLEOSIDE PHOSPHORYLASE"/>
    <property type="match status" value="1"/>
</dbReference>
<dbReference type="PANTHER" id="PTHR36540:SF1">
    <property type="entry name" value="PYRIMIDINE_PURINE NUCLEOSIDE PHOSPHORYLASE"/>
    <property type="match status" value="1"/>
</dbReference>
<dbReference type="Pfam" id="PF06865">
    <property type="entry name" value="Ppnp"/>
    <property type="match status" value="1"/>
</dbReference>
<dbReference type="SUPFAM" id="SSF51182">
    <property type="entry name" value="RmlC-like cupins"/>
    <property type="match status" value="1"/>
</dbReference>
<organism>
    <name type="scientific">Yersinia pestis bv. Antiqua (strain Nepal516)</name>
    <dbReference type="NCBI Taxonomy" id="377628"/>
    <lineage>
        <taxon>Bacteria</taxon>
        <taxon>Pseudomonadati</taxon>
        <taxon>Pseudomonadota</taxon>
        <taxon>Gammaproteobacteria</taxon>
        <taxon>Enterobacterales</taxon>
        <taxon>Yersiniaceae</taxon>
        <taxon>Yersinia</taxon>
    </lineage>
</organism>
<accession>Q1CLB9</accession>
<accession>C4GQF1</accession>
<comment type="function">
    <text evidence="1">Catalyzes the phosphorolysis of diverse nucleosides, yielding D-ribose 1-phosphate and the respective free bases. Can use uridine, adenosine, guanosine, cytidine, thymidine, inosine and xanthosine as substrates. Also catalyzes the reverse reactions.</text>
</comment>
<comment type="catalytic activity">
    <reaction evidence="1">
        <text>a purine D-ribonucleoside + phosphate = a purine nucleobase + alpha-D-ribose 1-phosphate</text>
        <dbReference type="Rhea" id="RHEA:19805"/>
        <dbReference type="ChEBI" id="CHEBI:26386"/>
        <dbReference type="ChEBI" id="CHEBI:43474"/>
        <dbReference type="ChEBI" id="CHEBI:57720"/>
        <dbReference type="ChEBI" id="CHEBI:142355"/>
        <dbReference type="EC" id="2.4.2.1"/>
    </reaction>
</comment>
<comment type="catalytic activity">
    <reaction evidence="1">
        <text>adenosine + phosphate = alpha-D-ribose 1-phosphate + adenine</text>
        <dbReference type="Rhea" id="RHEA:27642"/>
        <dbReference type="ChEBI" id="CHEBI:16335"/>
        <dbReference type="ChEBI" id="CHEBI:16708"/>
        <dbReference type="ChEBI" id="CHEBI:43474"/>
        <dbReference type="ChEBI" id="CHEBI:57720"/>
        <dbReference type="EC" id="2.4.2.1"/>
    </reaction>
</comment>
<comment type="catalytic activity">
    <reaction evidence="1">
        <text>cytidine + phosphate = cytosine + alpha-D-ribose 1-phosphate</text>
        <dbReference type="Rhea" id="RHEA:52540"/>
        <dbReference type="ChEBI" id="CHEBI:16040"/>
        <dbReference type="ChEBI" id="CHEBI:17562"/>
        <dbReference type="ChEBI" id="CHEBI:43474"/>
        <dbReference type="ChEBI" id="CHEBI:57720"/>
        <dbReference type="EC" id="2.4.2.2"/>
    </reaction>
</comment>
<comment type="catalytic activity">
    <reaction evidence="1">
        <text>guanosine + phosphate = alpha-D-ribose 1-phosphate + guanine</text>
        <dbReference type="Rhea" id="RHEA:13233"/>
        <dbReference type="ChEBI" id="CHEBI:16235"/>
        <dbReference type="ChEBI" id="CHEBI:16750"/>
        <dbReference type="ChEBI" id="CHEBI:43474"/>
        <dbReference type="ChEBI" id="CHEBI:57720"/>
        <dbReference type="EC" id="2.4.2.1"/>
    </reaction>
</comment>
<comment type="catalytic activity">
    <reaction evidence="1">
        <text>inosine + phosphate = alpha-D-ribose 1-phosphate + hypoxanthine</text>
        <dbReference type="Rhea" id="RHEA:27646"/>
        <dbReference type="ChEBI" id="CHEBI:17368"/>
        <dbReference type="ChEBI" id="CHEBI:17596"/>
        <dbReference type="ChEBI" id="CHEBI:43474"/>
        <dbReference type="ChEBI" id="CHEBI:57720"/>
        <dbReference type="EC" id="2.4.2.1"/>
    </reaction>
</comment>
<comment type="catalytic activity">
    <reaction evidence="1">
        <text>thymidine + phosphate = 2-deoxy-alpha-D-ribose 1-phosphate + thymine</text>
        <dbReference type="Rhea" id="RHEA:16037"/>
        <dbReference type="ChEBI" id="CHEBI:17748"/>
        <dbReference type="ChEBI" id="CHEBI:17821"/>
        <dbReference type="ChEBI" id="CHEBI:43474"/>
        <dbReference type="ChEBI" id="CHEBI:57259"/>
        <dbReference type="EC" id="2.4.2.2"/>
    </reaction>
</comment>
<comment type="catalytic activity">
    <reaction evidence="1">
        <text>uridine + phosphate = alpha-D-ribose 1-phosphate + uracil</text>
        <dbReference type="Rhea" id="RHEA:24388"/>
        <dbReference type="ChEBI" id="CHEBI:16704"/>
        <dbReference type="ChEBI" id="CHEBI:17568"/>
        <dbReference type="ChEBI" id="CHEBI:43474"/>
        <dbReference type="ChEBI" id="CHEBI:57720"/>
        <dbReference type="EC" id="2.4.2.2"/>
    </reaction>
</comment>
<comment type="catalytic activity">
    <reaction evidence="1">
        <text>xanthosine + phosphate = alpha-D-ribose 1-phosphate + xanthine</text>
        <dbReference type="Rhea" id="RHEA:27638"/>
        <dbReference type="ChEBI" id="CHEBI:17712"/>
        <dbReference type="ChEBI" id="CHEBI:18107"/>
        <dbReference type="ChEBI" id="CHEBI:43474"/>
        <dbReference type="ChEBI" id="CHEBI:57720"/>
        <dbReference type="EC" id="2.4.2.1"/>
    </reaction>
</comment>
<comment type="similarity">
    <text evidence="1">Belongs to the nucleoside phosphorylase PpnP family.</text>
</comment>